<organism>
    <name type="scientific">Shewanella baltica (strain OS185)</name>
    <dbReference type="NCBI Taxonomy" id="402882"/>
    <lineage>
        <taxon>Bacteria</taxon>
        <taxon>Pseudomonadati</taxon>
        <taxon>Pseudomonadota</taxon>
        <taxon>Gammaproteobacteria</taxon>
        <taxon>Alteromonadales</taxon>
        <taxon>Shewanellaceae</taxon>
        <taxon>Shewanella</taxon>
    </lineage>
</organism>
<keyword id="KW-0028">Amino-acid biosynthesis</keyword>
<keyword id="KW-0963">Cytoplasm</keyword>
<keyword id="KW-0368">Histidine biosynthesis</keyword>
<keyword id="KW-0456">Lyase</keyword>
<gene>
    <name evidence="1" type="primary">hisF</name>
    <name type="ordered locus">Shew185_2424</name>
</gene>
<dbReference type="EC" id="4.3.2.10" evidence="1"/>
<dbReference type="EMBL" id="CP000753">
    <property type="protein sequence ID" value="ABS08561.1"/>
    <property type="molecule type" value="Genomic_DNA"/>
</dbReference>
<dbReference type="RefSeq" id="WP_006081894.1">
    <property type="nucleotide sequence ID" value="NC_009665.1"/>
</dbReference>
<dbReference type="SMR" id="A6WP22"/>
<dbReference type="GeneID" id="11772644"/>
<dbReference type="KEGG" id="sbm:Shew185_2424"/>
<dbReference type="HOGENOM" id="CLU_048577_4_0_6"/>
<dbReference type="UniPathway" id="UPA00031">
    <property type="reaction ID" value="UER00010"/>
</dbReference>
<dbReference type="GO" id="GO:0005737">
    <property type="term" value="C:cytoplasm"/>
    <property type="evidence" value="ECO:0007669"/>
    <property type="project" value="UniProtKB-SubCell"/>
</dbReference>
<dbReference type="GO" id="GO:0000107">
    <property type="term" value="F:imidazoleglycerol-phosphate synthase activity"/>
    <property type="evidence" value="ECO:0007669"/>
    <property type="project" value="UniProtKB-UniRule"/>
</dbReference>
<dbReference type="GO" id="GO:0016829">
    <property type="term" value="F:lyase activity"/>
    <property type="evidence" value="ECO:0007669"/>
    <property type="project" value="UniProtKB-KW"/>
</dbReference>
<dbReference type="GO" id="GO:0000105">
    <property type="term" value="P:L-histidine biosynthetic process"/>
    <property type="evidence" value="ECO:0007669"/>
    <property type="project" value="UniProtKB-UniRule"/>
</dbReference>
<dbReference type="CDD" id="cd04731">
    <property type="entry name" value="HisF"/>
    <property type="match status" value="1"/>
</dbReference>
<dbReference type="FunFam" id="3.20.20.70:FF:000006">
    <property type="entry name" value="Imidazole glycerol phosphate synthase subunit HisF"/>
    <property type="match status" value="1"/>
</dbReference>
<dbReference type="Gene3D" id="3.20.20.70">
    <property type="entry name" value="Aldolase class I"/>
    <property type="match status" value="1"/>
</dbReference>
<dbReference type="HAMAP" id="MF_01013">
    <property type="entry name" value="HisF"/>
    <property type="match status" value="1"/>
</dbReference>
<dbReference type="InterPro" id="IPR013785">
    <property type="entry name" value="Aldolase_TIM"/>
</dbReference>
<dbReference type="InterPro" id="IPR006062">
    <property type="entry name" value="His_biosynth"/>
</dbReference>
<dbReference type="InterPro" id="IPR004651">
    <property type="entry name" value="HisF"/>
</dbReference>
<dbReference type="InterPro" id="IPR050064">
    <property type="entry name" value="IGPS_HisA/HisF"/>
</dbReference>
<dbReference type="InterPro" id="IPR011060">
    <property type="entry name" value="RibuloseP-bd_barrel"/>
</dbReference>
<dbReference type="NCBIfam" id="TIGR00735">
    <property type="entry name" value="hisF"/>
    <property type="match status" value="1"/>
</dbReference>
<dbReference type="PANTHER" id="PTHR21235:SF2">
    <property type="entry name" value="IMIDAZOLE GLYCEROL PHOSPHATE SYNTHASE HISHF"/>
    <property type="match status" value="1"/>
</dbReference>
<dbReference type="PANTHER" id="PTHR21235">
    <property type="entry name" value="IMIDAZOLE GLYCEROL PHOSPHATE SYNTHASE SUBUNIT HISF/H IGP SYNTHASE SUBUNIT HISF/H"/>
    <property type="match status" value="1"/>
</dbReference>
<dbReference type="Pfam" id="PF00977">
    <property type="entry name" value="His_biosynth"/>
    <property type="match status" value="1"/>
</dbReference>
<dbReference type="SUPFAM" id="SSF51366">
    <property type="entry name" value="Ribulose-phoshate binding barrel"/>
    <property type="match status" value="1"/>
</dbReference>
<evidence type="ECO:0000255" key="1">
    <source>
        <dbReference type="HAMAP-Rule" id="MF_01013"/>
    </source>
</evidence>
<comment type="function">
    <text evidence="1">IGPS catalyzes the conversion of PRFAR and glutamine to IGP, AICAR and glutamate. The HisF subunit catalyzes the cyclization activity that produces IGP and AICAR from PRFAR using the ammonia provided by the HisH subunit.</text>
</comment>
<comment type="catalytic activity">
    <reaction evidence="1">
        <text>5-[(5-phospho-1-deoxy-D-ribulos-1-ylimino)methylamino]-1-(5-phospho-beta-D-ribosyl)imidazole-4-carboxamide + L-glutamine = D-erythro-1-(imidazol-4-yl)glycerol 3-phosphate + 5-amino-1-(5-phospho-beta-D-ribosyl)imidazole-4-carboxamide + L-glutamate + H(+)</text>
        <dbReference type="Rhea" id="RHEA:24793"/>
        <dbReference type="ChEBI" id="CHEBI:15378"/>
        <dbReference type="ChEBI" id="CHEBI:29985"/>
        <dbReference type="ChEBI" id="CHEBI:58278"/>
        <dbReference type="ChEBI" id="CHEBI:58359"/>
        <dbReference type="ChEBI" id="CHEBI:58475"/>
        <dbReference type="ChEBI" id="CHEBI:58525"/>
        <dbReference type="EC" id="4.3.2.10"/>
    </reaction>
</comment>
<comment type="pathway">
    <text evidence="1">Amino-acid biosynthesis; L-histidine biosynthesis; L-histidine from 5-phospho-alpha-D-ribose 1-diphosphate: step 5/9.</text>
</comment>
<comment type="subunit">
    <text evidence="1">Heterodimer of HisH and HisF.</text>
</comment>
<comment type="subcellular location">
    <subcellularLocation>
        <location evidence="1">Cytoplasm</location>
    </subcellularLocation>
</comment>
<comment type="similarity">
    <text evidence="1">Belongs to the HisA/HisF family.</text>
</comment>
<protein>
    <recommendedName>
        <fullName evidence="1">Imidazole glycerol phosphate synthase subunit HisF</fullName>
        <ecNumber evidence="1">4.3.2.10</ecNumber>
    </recommendedName>
    <alternativeName>
        <fullName evidence="1">IGP synthase cyclase subunit</fullName>
    </alternativeName>
    <alternativeName>
        <fullName evidence="1">IGP synthase subunit HisF</fullName>
    </alternativeName>
    <alternativeName>
        <fullName evidence="1">ImGP synthase subunit HisF</fullName>
        <shortName evidence="1">IGPS subunit HisF</shortName>
    </alternativeName>
</protein>
<name>HIS6_SHEB8</name>
<accession>A6WP22</accession>
<feature type="chain" id="PRO_1000063143" description="Imidazole glycerol phosphate synthase subunit HisF">
    <location>
        <begin position="1"/>
        <end position="257"/>
    </location>
</feature>
<feature type="active site" evidence="1">
    <location>
        <position position="11"/>
    </location>
</feature>
<feature type="active site" evidence="1">
    <location>
        <position position="130"/>
    </location>
</feature>
<sequence>MLAKRLVPCLDVKDGKVVKGVQFRNHEIVGDIVPLAARYAEEGADELVFYDITASAHERVVDKSWVSRVAEQIDIPFCVAGGIKTISQARELLAFGADKISINSPALTDPSLISRLQDEFGRQCIVIGIDSFFDATSNSYKVKQFTGDEAATKDTQWFTQDWVEEVQKRGCGEIVLNVMNQDGVRGGYDIKQLSLVRAICDVPLIASGGAGTMAHFRDVFIEAKVDAALAASVFHKAIINIGELKAYLAAEGIAIRR</sequence>
<proteinExistence type="inferred from homology"/>
<reference key="1">
    <citation type="submission" date="2007-07" db="EMBL/GenBank/DDBJ databases">
        <title>Complete sequence of chromosome of Shewanella baltica OS185.</title>
        <authorList>
            <consortium name="US DOE Joint Genome Institute"/>
            <person name="Copeland A."/>
            <person name="Lucas S."/>
            <person name="Lapidus A."/>
            <person name="Barry K."/>
            <person name="Glavina del Rio T."/>
            <person name="Dalin E."/>
            <person name="Tice H."/>
            <person name="Pitluck S."/>
            <person name="Sims D."/>
            <person name="Brettin T."/>
            <person name="Bruce D."/>
            <person name="Detter J.C."/>
            <person name="Han C."/>
            <person name="Schmutz J."/>
            <person name="Larimer F."/>
            <person name="Land M."/>
            <person name="Hauser L."/>
            <person name="Kyrpides N."/>
            <person name="Mikhailova N."/>
            <person name="Brettar I."/>
            <person name="Rodrigues J."/>
            <person name="Konstantinidis K."/>
            <person name="Tiedje J."/>
            <person name="Richardson P."/>
        </authorList>
    </citation>
    <scope>NUCLEOTIDE SEQUENCE [LARGE SCALE GENOMIC DNA]</scope>
    <source>
        <strain>OS185</strain>
    </source>
</reference>